<keyword id="KW-0028">Amino-acid biosynthesis</keyword>
<keyword id="KW-0057">Aromatic amino acid biosynthesis</keyword>
<keyword id="KW-0150">Chloroplast</keyword>
<keyword id="KW-0934">Plastid</keyword>
<keyword id="KW-1185">Reference proteome</keyword>
<keyword id="KW-0808">Transferase</keyword>
<keyword id="KW-0809">Transit peptide</keyword>
<name>AROF_SOLLC</name>
<comment type="function">
    <text>May be involved in the synthesis of secondary metabolites derived from intermediates of the pre-chorismate pathway up to shikimate.</text>
</comment>
<comment type="catalytic activity">
    <reaction>
        <text>D-erythrose 4-phosphate + phosphoenolpyruvate + H2O = 7-phospho-2-dehydro-3-deoxy-D-arabino-heptonate + phosphate</text>
        <dbReference type="Rhea" id="RHEA:14717"/>
        <dbReference type="ChEBI" id="CHEBI:15377"/>
        <dbReference type="ChEBI" id="CHEBI:16897"/>
        <dbReference type="ChEBI" id="CHEBI:43474"/>
        <dbReference type="ChEBI" id="CHEBI:58394"/>
        <dbReference type="ChEBI" id="CHEBI:58702"/>
        <dbReference type="EC" id="2.5.1.54"/>
    </reaction>
</comment>
<comment type="pathway">
    <text>Metabolic intermediate biosynthesis; chorismate biosynthesis; chorismate from D-erythrose 4-phosphate and phosphoenolpyruvate: step 1/7.</text>
</comment>
<comment type="subcellular location">
    <subcellularLocation>
        <location>Plastid</location>
        <location>Chloroplast</location>
    </subcellularLocation>
</comment>
<comment type="tissue specificity">
    <text>Higher levels seen in the cotyledons than in the leaves and flowers. Lower levels seen in the roots and stems.</text>
</comment>
<comment type="similarity">
    <text evidence="2">Belongs to the class-II DAHP synthase family.</text>
</comment>
<organism>
    <name type="scientific">Solanum lycopersicum</name>
    <name type="common">Tomato</name>
    <name type="synonym">Lycopersicon esculentum</name>
    <dbReference type="NCBI Taxonomy" id="4081"/>
    <lineage>
        <taxon>Eukaryota</taxon>
        <taxon>Viridiplantae</taxon>
        <taxon>Streptophyta</taxon>
        <taxon>Embryophyta</taxon>
        <taxon>Tracheophyta</taxon>
        <taxon>Spermatophyta</taxon>
        <taxon>Magnoliopsida</taxon>
        <taxon>eudicotyledons</taxon>
        <taxon>Gunneridae</taxon>
        <taxon>Pentapetalae</taxon>
        <taxon>asterids</taxon>
        <taxon>lamiids</taxon>
        <taxon>Solanales</taxon>
        <taxon>Solanaceae</taxon>
        <taxon>Solanoideae</taxon>
        <taxon>Solaneae</taxon>
        <taxon>Solanum</taxon>
        <taxon>Solanum subgen. Lycopersicon</taxon>
    </lineage>
</organism>
<evidence type="ECO:0000255" key="1"/>
<evidence type="ECO:0000305" key="2"/>
<proteinExistence type="evidence at transcript level"/>
<dbReference type="EC" id="2.5.1.54"/>
<dbReference type="EMBL" id="Z21792">
    <property type="protein sequence ID" value="CAA79855.1"/>
    <property type="molecule type" value="mRNA"/>
</dbReference>
<dbReference type="PIR" id="S40411">
    <property type="entry name" value="S40411"/>
</dbReference>
<dbReference type="SMR" id="P37215"/>
<dbReference type="FunCoup" id="P37215">
    <property type="interactions" value="571"/>
</dbReference>
<dbReference type="STRING" id="4081.P37215"/>
<dbReference type="PaxDb" id="4081-Solyc11g009080.1.1"/>
<dbReference type="eggNOG" id="ENOG502QPP7">
    <property type="taxonomic scope" value="Eukaryota"/>
</dbReference>
<dbReference type="InParanoid" id="P37215"/>
<dbReference type="UniPathway" id="UPA00053">
    <property type="reaction ID" value="UER00084"/>
</dbReference>
<dbReference type="Proteomes" id="UP000004994">
    <property type="component" value="Unplaced"/>
</dbReference>
<dbReference type="ExpressionAtlas" id="P37215">
    <property type="expression patterns" value="baseline and differential"/>
</dbReference>
<dbReference type="GO" id="GO:0009507">
    <property type="term" value="C:chloroplast"/>
    <property type="evidence" value="ECO:0007669"/>
    <property type="project" value="UniProtKB-SubCell"/>
</dbReference>
<dbReference type="GO" id="GO:0003849">
    <property type="term" value="F:3-deoxy-7-phosphoheptulonate synthase activity"/>
    <property type="evidence" value="ECO:0007669"/>
    <property type="project" value="UniProtKB-EC"/>
</dbReference>
<dbReference type="GO" id="GO:0008652">
    <property type="term" value="P:amino acid biosynthetic process"/>
    <property type="evidence" value="ECO:0007669"/>
    <property type="project" value="UniProtKB-KW"/>
</dbReference>
<dbReference type="GO" id="GO:0009073">
    <property type="term" value="P:aromatic amino acid family biosynthetic process"/>
    <property type="evidence" value="ECO:0007669"/>
    <property type="project" value="UniProtKB-KW"/>
</dbReference>
<dbReference type="GO" id="GO:0009423">
    <property type="term" value="P:chorismate biosynthetic process"/>
    <property type="evidence" value="ECO:0007669"/>
    <property type="project" value="UniProtKB-UniPathway"/>
</dbReference>
<dbReference type="FunFam" id="3.20.20.70:FF:000128">
    <property type="entry name" value="Phospho-2-dehydro-3-deoxyheptonate aldolase"/>
    <property type="match status" value="1"/>
</dbReference>
<dbReference type="Gene3D" id="3.20.20.70">
    <property type="entry name" value="Aldolase class I"/>
    <property type="match status" value="1"/>
</dbReference>
<dbReference type="InterPro" id="IPR013785">
    <property type="entry name" value="Aldolase_TIM"/>
</dbReference>
<dbReference type="InterPro" id="IPR002480">
    <property type="entry name" value="DAHP_synth_2"/>
</dbReference>
<dbReference type="NCBIfam" id="TIGR01358">
    <property type="entry name" value="DAHP_synth_II"/>
    <property type="match status" value="1"/>
</dbReference>
<dbReference type="PANTHER" id="PTHR21337">
    <property type="entry name" value="PHOSPHO-2-DEHYDRO-3-DEOXYHEPTONATE ALDOLASE 1, 2"/>
    <property type="match status" value="1"/>
</dbReference>
<dbReference type="PANTHER" id="PTHR21337:SF24">
    <property type="entry name" value="PHOSPHO-2-DEHYDRO-3-DEOXYHEPTONATE ALDOLASE 1, CHLOROPLASTIC"/>
    <property type="match status" value="1"/>
</dbReference>
<dbReference type="Pfam" id="PF01474">
    <property type="entry name" value="DAHP_synth_2"/>
    <property type="match status" value="1"/>
</dbReference>
<dbReference type="SUPFAM" id="SSF51569">
    <property type="entry name" value="Aldolase"/>
    <property type="match status" value="1"/>
</dbReference>
<feature type="transit peptide" description="Chloroplast" evidence="1">
    <location>
        <begin position="1"/>
        <end position="49"/>
    </location>
</feature>
<feature type="chain" id="PRO_0000002300" description="Phospho-2-dehydro-3-deoxyheptonate aldolase 1, chloroplastic">
    <location>
        <begin position="50"/>
        <end position="511"/>
    </location>
</feature>
<reference key="1">
    <citation type="journal article" date="1993" name="Plant Mol. Biol.">
        <title>Differential expression of tomato (Lycopersicon esculentum L.) genes encoding shikimate pathway isoenzymes. I. 3-deoxy-D-arabino-heptulosonate 7-phosphate synthase.</title>
        <authorList>
            <person name="Goerlach J."/>
            <person name="Beck A."/>
            <person name="Henstrand J.M."/>
            <person name="Handa A.K."/>
            <person name="Herrmann K.M."/>
            <person name="Schmid J."/>
            <person name="Amrhein N."/>
        </authorList>
    </citation>
    <scope>NUCLEOTIDE SEQUENCE [MRNA]</scope>
    <source>
        <strain>cv. UC82B</strain>
    </source>
</reference>
<sequence>MALSNTLSLSSSKSLVQSHLLHNPTPQPRFSLFPTTQHGRRHPISAVHAAEPSKTAVKQGKWSLDSWKTKKALQLPEYPDEKELESVLKTLEMNPPLVFAGEARSLEEKLGEAALGKAFLLQGGDCAESFKEFNANNIRDTFRILLQMSVVLMFGGQVPVIKVGRMAGQFAKPRSDPFEEINGVKLPSYKGDNINGDTFDEKSRIPDPHRLIRAYMQSAATLNLLRAFATGGYAAMQRVTEWNLDFVENSEQGDRYQELAHRVDEALGFMAAAGLTVDHPIMSTTDFWTSHECLLLPYEQALTREDSTSGLFYDCSAHMVWVGERTRQLDGAHVEFLRGVANPLGIKVSQKMDPKELIKLIDILNPANKPGRITVIVRMGAENMRVKLSHLVRAVRGAGQIVTWVCDPMHGNTIKAPCGLKTRAFDSIQAEVRAFFDVHEQEGSHPWCIHLEMTGQNVTECIGGSRTVTYDDLGSRYHTHCDPRLNASQSLELSFIVAERLRRRRMSSQRL</sequence>
<protein>
    <recommendedName>
        <fullName>Phospho-2-dehydro-3-deoxyheptonate aldolase 1, chloroplastic</fullName>
        <ecNumber>2.5.1.54</ecNumber>
    </recommendedName>
    <alternativeName>
        <fullName>3-deoxy-D-arabino-heptulosonate 7-phosphate synthase 1</fullName>
    </alternativeName>
    <alternativeName>
        <fullName>DAHP synthase 1</fullName>
    </alternativeName>
    <alternativeName>
        <fullName>Phospho-2-keto-3-deoxyheptonate aldolase 1</fullName>
    </alternativeName>
</protein>
<accession>P37215</accession>